<reference key="1">
    <citation type="submission" date="2007-06" db="EMBL/GenBank/DDBJ databases">
        <title>Complete sequence of Methanococcus vannielii SB.</title>
        <authorList>
            <consortium name="US DOE Joint Genome Institute"/>
            <person name="Copeland A."/>
            <person name="Lucas S."/>
            <person name="Lapidus A."/>
            <person name="Barry K."/>
            <person name="Glavina del Rio T."/>
            <person name="Dalin E."/>
            <person name="Tice H."/>
            <person name="Pitluck S."/>
            <person name="Chain P."/>
            <person name="Malfatti S."/>
            <person name="Shin M."/>
            <person name="Vergez L."/>
            <person name="Schmutz J."/>
            <person name="Larimer F."/>
            <person name="Land M."/>
            <person name="Hauser L."/>
            <person name="Kyrpides N."/>
            <person name="Anderson I."/>
            <person name="Sieprawska-Lupa M."/>
            <person name="Whitman W.B."/>
            <person name="Richardson P."/>
        </authorList>
    </citation>
    <scope>NUCLEOTIDE SEQUENCE [LARGE SCALE GENOMIC DNA]</scope>
    <source>
        <strain>ATCC 35089 / DSM 1224 / JCM 13029 / OCM 148 / SB</strain>
    </source>
</reference>
<dbReference type="EMBL" id="CP000742">
    <property type="protein sequence ID" value="ABR54277.1"/>
    <property type="molecule type" value="Genomic_DNA"/>
</dbReference>
<dbReference type="RefSeq" id="WP_011972180.1">
    <property type="nucleotide sequence ID" value="NC_009634.1"/>
</dbReference>
<dbReference type="SMR" id="A6UP55"/>
<dbReference type="STRING" id="406327.Mevan_0368"/>
<dbReference type="GeneID" id="5325780"/>
<dbReference type="KEGG" id="mvn:Mevan_0368"/>
<dbReference type="eggNOG" id="arCOG00865">
    <property type="taxonomic scope" value="Archaea"/>
</dbReference>
<dbReference type="HOGENOM" id="CLU_022916_0_0_2"/>
<dbReference type="OrthoDB" id="32941at2157"/>
<dbReference type="Proteomes" id="UP000001107">
    <property type="component" value="Chromosome"/>
</dbReference>
<dbReference type="GO" id="GO:0005886">
    <property type="term" value="C:plasma membrane"/>
    <property type="evidence" value="ECO:0007669"/>
    <property type="project" value="UniProtKB-SubCell"/>
</dbReference>
<dbReference type="GO" id="GO:0005524">
    <property type="term" value="F:ATP binding"/>
    <property type="evidence" value="ECO:0007669"/>
    <property type="project" value="UniProtKB-UniRule"/>
</dbReference>
<dbReference type="GO" id="GO:0046933">
    <property type="term" value="F:proton-transporting ATP synthase activity, rotational mechanism"/>
    <property type="evidence" value="ECO:0007669"/>
    <property type="project" value="UniProtKB-UniRule"/>
</dbReference>
<dbReference type="GO" id="GO:0042777">
    <property type="term" value="P:proton motive force-driven plasma membrane ATP synthesis"/>
    <property type="evidence" value="ECO:0007669"/>
    <property type="project" value="UniProtKB-UniRule"/>
</dbReference>
<dbReference type="CDD" id="cd18112">
    <property type="entry name" value="ATP-synt_V_A-type_beta_C"/>
    <property type="match status" value="1"/>
</dbReference>
<dbReference type="CDD" id="cd18118">
    <property type="entry name" value="ATP-synt_V_A-type_beta_N"/>
    <property type="match status" value="1"/>
</dbReference>
<dbReference type="CDD" id="cd01135">
    <property type="entry name" value="V_A-ATPase_B"/>
    <property type="match status" value="1"/>
</dbReference>
<dbReference type="Gene3D" id="3.40.50.12240">
    <property type="match status" value="1"/>
</dbReference>
<dbReference type="HAMAP" id="MF_00310">
    <property type="entry name" value="ATP_synth_B_arch"/>
    <property type="match status" value="1"/>
</dbReference>
<dbReference type="InterPro" id="IPR055190">
    <property type="entry name" value="ATP-synt_VA_C"/>
</dbReference>
<dbReference type="InterPro" id="IPR020003">
    <property type="entry name" value="ATPase_a/bsu_AS"/>
</dbReference>
<dbReference type="InterPro" id="IPR004100">
    <property type="entry name" value="ATPase_F1/V1/A1_a/bsu_N"/>
</dbReference>
<dbReference type="InterPro" id="IPR000194">
    <property type="entry name" value="ATPase_F1/V1/A1_a/bsu_nucl-bd"/>
</dbReference>
<dbReference type="InterPro" id="IPR027417">
    <property type="entry name" value="P-loop_NTPase"/>
</dbReference>
<dbReference type="InterPro" id="IPR022879">
    <property type="entry name" value="V-ATPase_su_B/beta"/>
</dbReference>
<dbReference type="NCBIfam" id="NF003235">
    <property type="entry name" value="PRK04196.1"/>
    <property type="match status" value="1"/>
</dbReference>
<dbReference type="PANTHER" id="PTHR43389">
    <property type="entry name" value="V-TYPE PROTON ATPASE SUBUNIT B"/>
    <property type="match status" value="1"/>
</dbReference>
<dbReference type="PANTHER" id="PTHR43389:SF4">
    <property type="entry name" value="V-TYPE PROTON ATPASE SUBUNIT B"/>
    <property type="match status" value="1"/>
</dbReference>
<dbReference type="Pfam" id="PF00006">
    <property type="entry name" value="ATP-synt_ab"/>
    <property type="match status" value="1"/>
</dbReference>
<dbReference type="Pfam" id="PF02874">
    <property type="entry name" value="ATP-synt_ab_N"/>
    <property type="match status" value="1"/>
</dbReference>
<dbReference type="Pfam" id="PF22919">
    <property type="entry name" value="ATP-synt_VA_C"/>
    <property type="match status" value="1"/>
</dbReference>
<dbReference type="PIRSF" id="PIRSF039114">
    <property type="entry name" value="V-ATPsynth_beta/V-ATPase_B"/>
    <property type="match status" value="1"/>
</dbReference>
<dbReference type="SUPFAM" id="SSF47917">
    <property type="entry name" value="C-terminal domain of alpha and beta subunits of F1 ATP synthase"/>
    <property type="match status" value="1"/>
</dbReference>
<dbReference type="SUPFAM" id="SSF52540">
    <property type="entry name" value="P-loop containing nucleoside triphosphate hydrolases"/>
    <property type="match status" value="1"/>
</dbReference>
<dbReference type="PROSITE" id="PS00152">
    <property type="entry name" value="ATPASE_ALPHA_BETA"/>
    <property type="match status" value="1"/>
</dbReference>
<keyword id="KW-0066">ATP synthesis</keyword>
<keyword id="KW-1003">Cell membrane</keyword>
<keyword id="KW-0375">Hydrogen ion transport</keyword>
<keyword id="KW-0406">Ion transport</keyword>
<keyword id="KW-0472">Membrane</keyword>
<keyword id="KW-0813">Transport</keyword>
<proteinExistence type="inferred from homology"/>
<organism>
    <name type="scientific">Methanococcus vannielii (strain ATCC 35089 / DSM 1224 / JCM 13029 / OCM 148 / SB)</name>
    <dbReference type="NCBI Taxonomy" id="406327"/>
    <lineage>
        <taxon>Archaea</taxon>
        <taxon>Methanobacteriati</taxon>
        <taxon>Methanobacteriota</taxon>
        <taxon>Methanomada group</taxon>
        <taxon>Methanococci</taxon>
        <taxon>Methanococcales</taxon>
        <taxon>Methanococcaceae</taxon>
        <taxon>Methanococcus</taxon>
    </lineage>
</organism>
<evidence type="ECO:0000255" key="1">
    <source>
        <dbReference type="HAMAP-Rule" id="MF_00310"/>
    </source>
</evidence>
<gene>
    <name evidence="1" type="primary">atpB</name>
    <name type="ordered locus">Mevan_0368</name>
</gene>
<feature type="chain" id="PRO_1000059384" description="A-type ATP synthase subunit B">
    <location>
        <begin position="1"/>
        <end position="462"/>
    </location>
</feature>
<name>AATB_METVS</name>
<accession>A6UP55</accession>
<sequence length="462" mass="50586">MDAMQKTIEYTSVSRIAGPLMVIEGIEGIAYGEIVDITTPNGEKRTGQVLEAREDIAVVQVFEGTSELNTSETRVRFTGETAKIGVSKDMLGRIFNGAGKPLDGGPEIIAEKKVDINGYPLNPVSRNPPNAFVQTGISTIDGTNTLVRGQKIPIFSGSGLPHNMLAAQIARQAKVRGEGEQFAVVFAAMGITSEESNYFMDEFKKTGALEKAVVFINLADDPAIERIITPRIALTTAEYLAYEKGMHVLVILTDLTNYCEALREIAAARNEVPGRRGYPGYMYTDLASLYERAGRVKGKEGTVTQIPILTMPHDDITHPIPDLTGYITEGQIVLSRELNRKGIYPPVDILPSLSRLAGNGQGPGKTRDDHAKVISQAYAAYAEGRGLRDLVAVVGEEALTERDRAFLKFADAFEGRVVTQGVDEDRSIEETLDIIWELLTILPKSELKRVSDELIEKYLPKK</sequence>
<comment type="function">
    <text evidence="1">Component of the A-type ATP synthase that produces ATP from ADP in the presence of a proton gradient across the membrane. The B chain is a regulatory subunit.</text>
</comment>
<comment type="subunit">
    <text evidence="1">Has multiple subunits with at least A(3), B(3), C, D, E, F, H, I and proteolipid K(x).</text>
</comment>
<comment type="subcellular location">
    <subcellularLocation>
        <location evidence="1">Cell membrane</location>
        <topology evidence="1">Peripheral membrane protein</topology>
    </subcellularLocation>
</comment>
<comment type="similarity">
    <text evidence="1">Belongs to the ATPase alpha/beta chains family.</text>
</comment>
<protein>
    <recommendedName>
        <fullName evidence="1">A-type ATP synthase subunit B</fullName>
    </recommendedName>
</protein>